<comment type="catalytic activity">
    <reaction evidence="1">
        <text>tRNA(Gly) + glycine + ATP = glycyl-tRNA(Gly) + AMP + diphosphate</text>
        <dbReference type="Rhea" id="RHEA:16013"/>
        <dbReference type="Rhea" id="RHEA-COMP:9664"/>
        <dbReference type="Rhea" id="RHEA-COMP:9683"/>
        <dbReference type="ChEBI" id="CHEBI:30616"/>
        <dbReference type="ChEBI" id="CHEBI:33019"/>
        <dbReference type="ChEBI" id="CHEBI:57305"/>
        <dbReference type="ChEBI" id="CHEBI:78442"/>
        <dbReference type="ChEBI" id="CHEBI:78522"/>
        <dbReference type="ChEBI" id="CHEBI:456215"/>
        <dbReference type="EC" id="6.1.1.14"/>
    </reaction>
</comment>
<comment type="subunit">
    <text evidence="1">Tetramer of two alpha and two beta subunits.</text>
</comment>
<comment type="subcellular location">
    <subcellularLocation>
        <location evidence="1">Cytoplasm</location>
    </subcellularLocation>
</comment>
<comment type="similarity">
    <text evidence="1">Belongs to the class-II aminoacyl-tRNA synthetase family.</text>
</comment>
<organism>
    <name type="scientific">Pseudomonas putida (strain GB-1)</name>
    <dbReference type="NCBI Taxonomy" id="76869"/>
    <lineage>
        <taxon>Bacteria</taxon>
        <taxon>Pseudomonadati</taxon>
        <taxon>Pseudomonadota</taxon>
        <taxon>Gammaproteobacteria</taxon>
        <taxon>Pseudomonadales</taxon>
        <taxon>Pseudomonadaceae</taxon>
        <taxon>Pseudomonas</taxon>
    </lineage>
</organism>
<dbReference type="EC" id="6.1.1.14" evidence="1"/>
<dbReference type="EMBL" id="CP000926">
    <property type="protein sequence ID" value="ABY95993.1"/>
    <property type="molecule type" value="Genomic_DNA"/>
</dbReference>
<dbReference type="RefSeq" id="WP_012269869.1">
    <property type="nucleotide sequence ID" value="NC_010322.1"/>
</dbReference>
<dbReference type="SMR" id="B0KF23"/>
<dbReference type="GeneID" id="49615059"/>
<dbReference type="KEGG" id="ppg:PputGB1_0077"/>
<dbReference type="eggNOG" id="COG0752">
    <property type="taxonomic scope" value="Bacteria"/>
</dbReference>
<dbReference type="HOGENOM" id="CLU_057066_1_0_6"/>
<dbReference type="Proteomes" id="UP000002157">
    <property type="component" value="Chromosome"/>
</dbReference>
<dbReference type="GO" id="GO:0005829">
    <property type="term" value="C:cytosol"/>
    <property type="evidence" value="ECO:0007669"/>
    <property type="project" value="TreeGrafter"/>
</dbReference>
<dbReference type="GO" id="GO:0005524">
    <property type="term" value="F:ATP binding"/>
    <property type="evidence" value="ECO:0007669"/>
    <property type="project" value="UniProtKB-UniRule"/>
</dbReference>
<dbReference type="GO" id="GO:0004820">
    <property type="term" value="F:glycine-tRNA ligase activity"/>
    <property type="evidence" value="ECO:0007669"/>
    <property type="project" value="UniProtKB-UniRule"/>
</dbReference>
<dbReference type="GO" id="GO:0006426">
    <property type="term" value="P:glycyl-tRNA aminoacylation"/>
    <property type="evidence" value="ECO:0007669"/>
    <property type="project" value="UniProtKB-UniRule"/>
</dbReference>
<dbReference type="CDD" id="cd00733">
    <property type="entry name" value="GlyRS_alpha_core"/>
    <property type="match status" value="1"/>
</dbReference>
<dbReference type="FunFam" id="3.30.930.10:FF:000006">
    <property type="entry name" value="Glycine--tRNA ligase alpha subunit"/>
    <property type="match status" value="1"/>
</dbReference>
<dbReference type="Gene3D" id="3.30.930.10">
    <property type="entry name" value="Bira Bifunctional Protein, Domain 2"/>
    <property type="match status" value="1"/>
</dbReference>
<dbReference type="Gene3D" id="1.20.58.180">
    <property type="entry name" value="Class II aaRS and biotin synthetases, domain 2"/>
    <property type="match status" value="1"/>
</dbReference>
<dbReference type="HAMAP" id="MF_00254">
    <property type="entry name" value="Gly_tRNA_synth_alpha"/>
    <property type="match status" value="1"/>
</dbReference>
<dbReference type="InterPro" id="IPR045864">
    <property type="entry name" value="aa-tRNA-synth_II/BPL/LPL"/>
</dbReference>
<dbReference type="InterPro" id="IPR006194">
    <property type="entry name" value="Gly-tRNA-synth_heterodimer"/>
</dbReference>
<dbReference type="InterPro" id="IPR002310">
    <property type="entry name" value="Gly-tRNA_ligase_asu"/>
</dbReference>
<dbReference type="NCBIfam" id="TIGR00388">
    <property type="entry name" value="glyQ"/>
    <property type="match status" value="1"/>
</dbReference>
<dbReference type="NCBIfam" id="NF006827">
    <property type="entry name" value="PRK09348.1"/>
    <property type="match status" value="1"/>
</dbReference>
<dbReference type="PANTHER" id="PTHR30075:SF2">
    <property type="entry name" value="GLYCINE--TRNA LIGASE, CHLOROPLASTIC_MITOCHONDRIAL 2"/>
    <property type="match status" value="1"/>
</dbReference>
<dbReference type="PANTHER" id="PTHR30075">
    <property type="entry name" value="GLYCYL-TRNA SYNTHETASE"/>
    <property type="match status" value="1"/>
</dbReference>
<dbReference type="Pfam" id="PF02091">
    <property type="entry name" value="tRNA-synt_2e"/>
    <property type="match status" value="1"/>
</dbReference>
<dbReference type="PRINTS" id="PR01044">
    <property type="entry name" value="TRNASYNTHGA"/>
</dbReference>
<dbReference type="SUPFAM" id="SSF55681">
    <property type="entry name" value="Class II aaRS and biotin synthetases"/>
    <property type="match status" value="1"/>
</dbReference>
<dbReference type="PROSITE" id="PS50861">
    <property type="entry name" value="AA_TRNA_LIGASE_II_GLYAB"/>
    <property type="match status" value="1"/>
</dbReference>
<proteinExistence type="inferred from homology"/>
<reference key="1">
    <citation type="submission" date="2008-01" db="EMBL/GenBank/DDBJ databases">
        <title>Complete sequence of Pseudomonas putida GB-1.</title>
        <authorList>
            <consortium name="US DOE Joint Genome Institute"/>
            <person name="Copeland A."/>
            <person name="Lucas S."/>
            <person name="Lapidus A."/>
            <person name="Barry K."/>
            <person name="Glavina del Rio T."/>
            <person name="Dalin E."/>
            <person name="Tice H."/>
            <person name="Pitluck S."/>
            <person name="Bruce D."/>
            <person name="Goodwin L."/>
            <person name="Chertkov O."/>
            <person name="Brettin T."/>
            <person name="Detter J.C."/>
            <person name="Han C."/>
            <person name="Kuske C.R."/>
            <person name="Schmutz J."/>
            <person name="Larimer F."/>
            <person name="Land M."/>
            <person name="Hauser L."/>
            <person name="Kyrpides N."/>
            <person name="Kim E."/>
            <person name="McCarthy J.K."/>
            <person name="Richardson P."/>
        </authorList>
    </citation>
    <scope>NUCLEOTIDE SEQUENCE [LARGE SCALE GENOMIC DNA]</scope>
    <source>
        <strain>GB-1</strain>
    </source>
</reference>
<gene>
    <name evidence="1" type="primary">glyQ</name>
    <name type="ordered locus">PputGB1_0077</name>
</gene>
<feature type="chain" id="PRO_1000078532" description="Glycine--tRNA ligase alpha subunit">
    <location>
        <begin position="1"/>
        <end position="315"/>
    </location>
</feature>
<accession>B0KF23</accession>
<name>SYGA_PSEPG</name>
<protein>
    <recommendedName>
        <fullName evidence="1">Glycine--tRNA ligase alpha subunit</fullName>
        <ecNumber evidence="1">6.1.1.14</ecNumber>
    </recommendedName>
    <alternativeName>
        <fullName evidence="1">Glycyl-tRNA synthetase alpha subunit</fullName>
        <shortName evidence="1">GlyRS</shortName>
    </alternativeName>
</protein>
<evidence type="ECO:0000255" key="1">
    <source>
        <dbReference type="HAMAP-Rule" id="MF_00254"/>
    </source>
</evidence>
<keyword id="KW-0030">Aminoacyl-tRNA synthetase</keyword>
<keyword id="KW-0067">ATP-binding</keyword>
<keyword id="KW-0963">Cytoplasm</keyword>
<keyword id="KW-0436">Ligase</keyword>
<keyword id="KW-0547">Nucleotide-binding</keyword>
<keyword id="KW-0648">Protein biosynthesis</keyword>
<sequence length="315" mass="36010">MSQPTPAVRTFQDLILALQNYWAAQGCVVLQPYDMEVGAGTFHTATFLRAVGPETWNAAYVQPSRRPADGRYGENPNRLQHYYQFQVVLKPNPANFQELYLGSLKAIGLDPLVHDIRFVEDNWESPTLGAWGLGWEIWLNGMEVTQFTYFQQVGGIECYPVTGEITYGLERLAMYIQGVDSVYDLVWADGPFGKVTYGDVFHQNEVEQSTYNFEHANVDKLFELFDFYESEANRLIKLDLPLPTYEMVLKASHTFNLLDARRAISVTERQRYILRVRTLARDVAQSYLQARARLGFPMATPELRDEVLAKLEAAQ</sequence>